<gene>
    <name evidence="1" type="primary">hisC</name>
    <name type="ordered locus">YpsIP31758_2430</name>
</gene>
<comment type="catalytic activity">
    <reaction evidence="1">
        <text>L-histidinol phosphate + 2-oxoglutarate = 3-(imidazol-4-yl)-2-oxopropyl phosphate + L-glutamate</text>
        <dbReference type="Rhea" id="RHEA:23744"/>
        <dbReference type="ChEBI" id="CHEBI:16810"/>
        <dbReference type="ChEBI" id="CHEBI:29985"/>
        <dbReference type="ChEBI" id="CHEBI:57766"/>
        <dbReference type="ChEBI" id="CHEBI:57980"/>
        <dbReference type="EC" id="2.6.1.9"/>
    </reaction>
</comment>
<comment type="cofactor">
    <cofactor evidence="1">
        <name>pyridoxal 5'-phosphate</name>
        <dbReference type="ChEBI" id="CHEBI:597326"/>
    </cofactor>
</comment>
<comment type="pathway">
    <text evidence="1">Amino-acid biosynthesis; L-histidine biosynthesis; L-histidine from 5-phospho-alpha-D-ribose 1-diphosphate: step 7/9.</text>
</comment>
<comment type="subunit">
    <text evidence="1">Homodimer.</text>
</comment>
<comment type="similarity">
    <text evidence="1">Belongs to the class-II pyridoxal-phosphate-dependent aminotransferase family. Histidinol-phosphate aminotransferase subfamily.</text>
</comment>
<reference key="1">
    <citation type="journal article" date="2007" name="PLoS Genet.">
        <title>The complete genome sequence of Yersinia pseudotuberculosis IP31758, the causative agent of Far East scarlet-like fever.</title>
        <authorList>
            <person name="Eppinger M."/>
            <person name="Rosovitz M.J."/>
            <person name="Fricke W.F."/>
            <person name="Rasko D.A."/>
            <person name="Kokorina G."/>
            <person name="Fayolle C."/>
            <person name="Lindler L.E."/>
            <person name="Carniel E."/>
            <person name="Ravel J."/>
        </authorList>
    </citation>
    <scope>NUCLEOTIDE SEQUENCE [LARGE SCALE GENOMIC DNA]</scope>
    <source>
        <strain>IP 31758</strain>
    </source>
</reference>
<proteinExistence type="inferred from homology"/>
<organism>
    <name type="scientific">Yersinia pseudotuberculosis serotype O:1b (strain IP 31758)</name>
    <dbReference type="NCBI Taxonomy" id="349747"/>
    <lineage>
        <taxon>Bacteria</taxon>
        <taxon>Pseudomonadati</taxon>
        <taxon>Pseudomonadota</taxon>
        <taxon>Gammaproteobacteria</taxon>
        <taxon>Enterobacterales</taxon>
        <taxon>Yersiniaceae</taxon>
        <taxon>Yersinia</taxon>
    </lineage>
</organism>
<evidence type="ECO:0000255" key="1">
    <source>
        <dbReference type="HAMAP-Rule" id="MF_01023"/>
    </source>
</evidence>
<evidence type="ECO:0000256" key="2">
    <source>
        <dbReference type="SAM" id="MobiDB-lite"/>
    </source>
</evidence>
<protein>
    <recommendedName>
        <fullName evidence="1">Histidinol-phosphate aminotransferase</fullName>
        <ecNumber evidence="1">2.6.1.9</ecNumber>
    </recommendedName>
    <alternativeName>
        <fullName evidence="1">Imidazole acetol-phosphate transaminase</fullName>
    </alternativeName>
</protein>
<sequence length="382" mass="41947">MSQSNNVTDLARANIRALTPYMSARRLGGNGDVWLNANEYPLGTEYQLTTQTFNRYPECQPKHVIERYAAYAGLPPEQVLVSRGADEGIELLIRAFCEPGQDAILFCPPTYGMYAVSAETFGVERRTVPAQADWQLDLPAIANNLEQVKVIYVCSPNNPTGNLINPADLQAVLALAQGRAIVAIDEAYIEFCPQASVSNWLKDYPNLVILRTLSKAFALAGLRCGFTLANSDIIQLLLKVIAPYPLSTPVADIAAQALSPQGIEQMRQRVSEVRANRAWLQSALQDCACVEQVFTSESNYLLVRFTASSSVFKVLWDQGIILRDQNKQPGLANCLRITIGTRQECERVIAALAPLAGIDNSNNIDNQSKTHSQTSSIRKGTI</sequence>
<name>HIS8_YERP3</name>
<keyword id="KW-0028">Amino-acid biosynthesis</keyword>
<keyword id="KW-0032">Aminotransferase</keyword>
<keyword id="KW-0368">Histidine biosynthesis</keyword>
<keyword id="KW-0663">Pyridoxal phosphate</keyword>
<keyword id="KW-0808">Transferase</keyword>
<dbReference type="EC" id="2.6.1.9" evidence="1"/>
<dbReference type="EMBL" id="CP000720">
    <property type="protein sequence ID" value="ABS46091.1"/>
    <property type="molecule type" value="Genomic_DNA"/>
</dbReference>
<dbReference type="RefSeq" id="WP_012105317.1">
    <property type="nucleotide sequence ID" value="NC_009708.1"/>
</dbReference>
<dbReference type="SMR" id="A7FJH1"/>
<dbReference type="KEGG" id="ypi:YpsIP31758_2430"/>
<dbReference type="HOGENOM" id="CLU_017584_3_1_6"/>
<dbReference type="UniPathway" id="UPA00031">
    <property type="reaction ID" value="UER00012"/>
</dbReference>
<dbReference type="Proteomes" id="UP000002412">
    <property type="component" value="Chromosome"/>
</dbReference>
<dbReference type="GO" id="GO:0004400">
    <property type="term" value="F:histidinol-phosphate transaminase activity"/>
    <property type="evidence" value="ECO:0007669"/>
    <property type="project" value="UniProtKB-UniRule"/>
</dbReference>
<dbReference type="GO" id="GO:0030170">
    <property type="term" value="F:pyridoxal phosphate binding"/>
    <property type="evidence" value="ECO:0007669"/>
    <property type="project" value="InterPro"/>
</dbReference>
<dbReference type="GO" id="GO:0000105">
    <property type="term" value="P:L-histidine biosynthetic process"/>
    <property type="evidence" value="ECO:0007669"/>
    <property type="project" value="UniProtKB-UniRule"/>
</dbReference>
<dbReference type="CDD" id="cd00609">
    <property type="entry name" value="AAT_like"/>
    <property type="match status" value="1"/>
</dbReference>
<dbReference type="Gene3D" id="3.90.1150.10">
    <property type="entry name" value="Aspartate Aminotransferase, domain 1"/>
    <property type="match status" value="1"/>
</dbReference>
<dbReference type="Gene3D" id="3.40.640.10">
    <property type="entry name" value="Type I PLP-dependent aspartate aminotransferase-like (Major domain)"/>
    <property type="match status" value="1"/>
</dbReference>
<dbReference type="HAMAP" id="MF_01023">
    <property type="entry name" value="HisC_aminotrans_2"/>
    <property type="match status" value="1"/>
</dbReference>
<dbReference type="InterPro" id="IPR001917">
    <property type="entry name" value="Aminotrans_II_pyridoxalP_BS"/>
</dbReference>
<dbReference type="InterPro" id="IPR004839">
    <property type="entry name" value="Aminotransferase_I/II_large"/>
</dbReference>
<dbReference type="InterPro" id="IPR005861">
    <property type="entry name" value="HisP_aminotrans"/>
</dbReference>
<dbReference type="InterPro" id="IPR015424">
    <property type="entry name" value="PyrdxlP-dep_Trfase"/>
</dbReference>
<dbReference type="InterPro" id="IPR015421">
    <property type="entry name" value="PyrdxlP-dep_Trfase_major"/>
</dbReference>
<dbReference type="InterPro" id="IPR015422">
    <property type="entry name" value="PyrdxlP-dep_Trfase_small"/>
</dbReference>
<dbReference type="NCBIfam" id="TIGR01141">
    <property type="entry name" value="hisC"/>
    <property type="match status" value="1"/>
</dbReference>
<dbReference type="PANTHER" id="PTHR42885:SF2">
    <property type="entry name" value="HISTIDINOL-PHOSPHATE AMINOTRANSFERASE"/>
    <property type="match status" value="1"/>
</dbReference>
<dbReference type="PANTHER" id="PTHR42885">
    <property type="entry name" value="HISTIDINOL-PHOSPHATE AMINOTRANSFERASE-RELATED"/>
    <property type="match status" value="1"/>
</dbReference>
<dbReference type="Pfam" id="PF00155">
    <property type="entry name" value="Aminotran_1_2"/>
    <property type="match status" value="1"/>
</dbReference>
<dbReference type="SUPFAM" id="SSF53383">
    <property type="entry name" value="PLP-dependent transferases"/>
    <property type="match status" value="1"/>
</dbReference>
<dbReference type="PROSITE" id="PS00599">
    <property type="entry name" value="AA_TRANSFER_CLASS_2"/>
    <property type="match status" value="1"/>
</dbReference>
<accession>A7FJH1</accession>
<feature type="chain" id="PRO_1000063512" description="Histidinol-phosphate aminotransferase">
    <location>
        <begin position="1"/>
        <end position="382"/>
    </location>
</feature>
<feature type="region of interest" description="Disordered" evidence="2">
    <location>
        <begin position="363"/>
        <end position="382"/>
    </location>
</feature>
<feature type="modified residue" description="N6-(pyridoxal phosphate)lysine" evidence="1">
    <location>
        <position position="215"/>
    </location>
</feature>